<protein>
    <recommendedName>
        <fullName evidence="1">ATP synthase subunit beta</fullName>
        <ecNumber evidence="1">7.1.2.2</ecNumber>
    </recommendedName>
    <alternativeName>
        <fullName evidence="1">ATP synthase F1 sector subunit beta</fullName>
    </alternativeName>
    <alternativeName>
        <fullName evidence="1">F-ATPase subunit beta</fullName>
    </alternativeName>
</protein>
<feature type="chain" id="PRO_1000166574" description="ATP synthase subunit beta">
    <location>
        <begin position="1"/>
        <end position="469"/>
    </location>
</feature>
<feature type="binding site" evidence="1">
    <location>
        <begin position="157"/>
        <end position="164"/>
    </location>
    <ligand>
        <name>ATP</name>
        <dbReference type="ChEBI" id="CHEBI:30616"/>
    </ligand>
</feature>
<accession>C0Z776</accession>
<organism>
    <name type="scientific">Brevibacillus brevis (strain 47 / JCM 6285 / NBRC 100599)</name>
    <dbReference type="NCBI Taxonomy" id="358681"/>
    <lineage>
        <taxon>Bacteria</taxon>
        <taxon>Bacillati</taxon>
        <taxon>Bacillota</taxon>
        <taxon>Bacilli</taxon>
        <taxon>Bacillales</taxon>
        <taxon>Paenibacillaceae</taxon>
        <taxon>Brevibacillus</taxon>
    </lineage>
</organism>
<name>ATPB_BREBN</name>
<sequence length="469" mass="50942">MANGRVVQVMGPVVDVEFDRGHLPAIYNAIKIQHKAQSAGERDIDLTVEVATHLGDNLVRTVAMSSTDGLVRGMEAVDTGAAISVPVGAITLGRVFNVLGEPIDLQELGQVDRRDPIHRKAPEFVDQATTVEILETGIKVIDLLAPYIKGGKIGLFGGAGVGKTVTIQELINNIAQEHGGISVFAGVGERTREGNDLYHEMKDAGVLPKTAMVFGQMNEPPGARLRVALTGLTMAEYFRDEEGRDVLLFVDNIFRFTQAGSEVSALLGRMPSAVGYQPTLATEMGQLQERITSTKKGSVTSIQAIYVPADDYTDPAPATTFAHLDATTNLERSIAELGIFPAVDPLASTSRALAPDIVGQEHYDVARSVQKILQRYKELQDIIAILGMDELSDDDKQVVGRARRIQRFLSQSFHVAEQFTGNPGQYVPLKETVRSFKEILEGKHDHLPEGAFLYVGTIEEAVEKAKKMA</sequence>
<evidence type="ECO:0000255" key="1">
    <source>
        <dbReference type="HAMAP-Rule" id="MF_01347"/>
    </source>
</evidence>
<reference key="1">
    <citation type="submission" date="2005-03" db="EMBL/GenBank/DDBJ databases">
        <title>Brevibacillus brevis strain 47, complete genome.</title>
        <authorList>
            <person name="Hosoyama A."/>
            <person name="Yamada R."/>
            <person name="Hongo Y."/>
            <person name="Terui Y."/>
            <person name="Ankai A."/>
            <person name="Masuyama W."/>
            <person name="Sekiguchi M."/>
            <person name="Takeda T."/>
            <person name="Asano K."/>
            <person name="Ohji S."/>
            <person name="Ichikawa N."/>
            <person name="Narita S."/>
            <person name="Aoki N."/>
            <person name="Miura H."/>
            <person name="Matsushita S."/>
            <person name="Sekigawa T."/>
            <person name="Yamagata H."/>
            <person name="Yoshikawa H."/>
            <person name="Udaka S."/>
            <person name="Tanikawa S."/>
            <person name="Fujita N."/>
        </authorList>
    </citation>
    <scope>NUCLEOTIDE SEQUENCE [LARGE SCALE GENOMIC DNA]</scope>
    <source>
        <strain>47 / JCM 6285 / NBRC 100599</strain>
    </source>
</reference>
<comment type="function">
    <text evidence="1">Produces ATP from ADP in the presence of a proton gradient across the membrane. The catalytic sites are hosted primarily by the beta subunits.</text>
</comment>
<comment type="catalytic activity">
    <reaction evidence="1">
        <text>ATP + H2O + 4 H(+)(in) = ADP + phosphate + 5 H(+)(out)</text>
        <dbReference type="Rhea" id="RHEA:57720"/>
        <dbReference type="ChEBI" id="CHEBI:15377"/>
        <dbReference type="ChEBI" id="CHEBI:15378"/>
        <dbReference type="ChEBI" id="CHEBI:30616"/>
        <dbReference type="ChEBI" id="CHEBI:43474"/>
        <dbReference type="ChEBI" id="CHEBI:456216"/>
        <dbReference type="EC" id="7.1.2.2"/>
    </reaction>
</comment>
<comment type="subunit">
    <text evidence="1">F-type ATPases have 2 components, CF(1) - the catalytic core - and CF(0) - the membrane proton channel. CF(1) has five subunits: alpha(3), beta(3), gamma(1), delta(1), epsilon(1). CF(0) has three main subunits: a(1), b(2) and c(9-12). The alpha and beta chains form an alternating ring which encloses part of the gamma chain. CF(1) is attached to CF(0) by a central stalk formed by the gamma and epsilon chains, while a peripheral stalk is formed by the delta and b chains.</text>
</comment>
<comment type="subcellular location">
    <subcellularLocation>
        <location evidence="1">Cell membrane</location>
        <topology evidence="1">Peripheral membrane protein</topology>
    </subcellularLocation>
</comment>
<comment type="similarity">
    <text evidence="1">Belongs to the ATPase alpha/beta chains family.</text>
</comment>
<gene>
    <name evidence="1" type="primary">atpD</name>
    <name type="ordered locus">BBR47_54480</name>
</gene>
<dbReference type="EC" id="7.1.2.2" evidence="1"/>
<dbReference type="EMBL" id="AP008955">
    <property type="protein sequence ID" value="BAH46425.1"/>
    <property type="molecule type" value="Genomic_DNA"/>
</dbReference>
<dbReference type="RefSeq" id="WP_015893618.1">
    <property type="nucleotide sequence ID" value="NC_012491.1"/>
</dbReference>
<dbReference type="SMR" id="C0Z776"/>
<dbReference type="STRING" id="358681.BBR47_54480"/>
<dbReference type="KEGG" id="bbe:BBR47_54480"/>
<dbReference type="eggNOG" id="COG0055">
    <property type="taxonomic scope" value="Bacteria"/>
</dbReference>
<dbReference type="HOGENOM" id="CLU_022398_0_2_9"/>
<dbReference type="Proteomes" id="UP000001877">
    <property type="component" value="Chromosome"/>
</dbReference>
<dbReference type="GO" id="GO:0005886">
    <property type="term" value="C:plasma membrane"/>
    <property type="evidence" value="ECO:0007669"/>
    <property type="project" value="UniProtKB-SubCell"/>
</dbReference>
<dbReference type="GO" id="GO:0045259">
    <property type="term" value="C:proton-transporting ATP synthase complex"/>
    <property type="evidence" value="ECO:0007669"/>
    <property type="project" value="UniProtKB-KW"/>
</dbReference>
<dbReference type="GO" id="GO:0005524">
    <property type="term" value="F:ATP binding"/>
    <property type="evidence" value="ECO:0007669"/>
    <property type="project" value="UniProtKB-UniRule"/>
</dbReference>
<dbReference type="GO" id="GO:0016887">
    <property type="term" value="F:ATP hydrolysis activity"/>
    <property type="evidence" value="ECO:0007669"/>
    <property type="project" value="InterPro"/>
</dbReference>
<dbReference type="GO" id="GO:0046933">
    <property type="term" value="F:proton-transporting ATP synthase activity, rotational mechanism"/>
    <property type="evidence" value="ECO:0007669"/>
    <property type="project" value="UniProtKB-UniRule"/>
</dbReference>
<dbReference type="CDD" id="cd18110">
    <property type="entry name" value="ATP-synt_F1_beta_C"/>
    <property type="match status" value="1"/>
</dbReference>
<dbReference type="CDD" id="cd18115">
    <property type="entry name" value="ATP-synt_F1_beta_N"/>
    <property type="match status" value="1"/>
</dbReference>
<dbReference type="CDD" id="cd01133">
    <property type="entry name" value="F1-ATPase_beta_CD"/>
    <property type="match status" value="1"/>
</dbReference>
<dbReference type="FunFam" id="1.10.1140.10:FF:000001">
    <property type="entry name" value="ATP synthase subunit beta"/>
    <property type="match status" value="1"/>
</dbReference>
<dbReference type="FunFam" id="2.40.10.170:FF:000005">
    <property type="entry name" value="ATP synthase subunit beta"/>
    <property type="match status" value="1"/>
</dbReference>
<dbReference type="FunFam" id="3.40.50.300:FF:000004">
    <property type="entry name" value="ATP synthase subunit beta"/>
    <property type="match status" value="1"/>
</dbReference>
<dbReference type="Gene3D" id="2.40.10.170">
    <property type="match status" value="1"/>
</dbReference>
<dbReference type="Gene3D" id="1.10.1140.10">
    <property type="entry name" value="Bovine Mitochondrial F1-atpase, Atp Synthase Beta Chain, Chain D, domain 3"/>
    <property type="match status" value="1"/>
</dbReference>
<dbReference type="Gene3D" id="3.40.50.300">
    <property type="entry name" value="P-loop containing nucleotide triphosphate hydrolases"/>
    <property type="match status" value="1"/>
</dbReference>
<dbReference type="HAMAP" id="MF_01347">
    <property type="entry name" value="ATP_synth_beta_bact"/>
    <property type="match status" value="1"/>
</dbReference>
<dbReference type="InterPro" id="IPR003593">
    <property type="entry name" value="AAA+_ATPase"/>
</dbReference>
<dbReference type="InterPro" id="IPR055190">
    <property type="entry name" value="ATP-synt_VA_C"/>
</dbReference>
<dbReference type="InterPro" id="IPR005722">
    <property type="entry name" value="ATP_synth_F1_bsu"/>
</dbReference>
<dbReference type="InterPro" id="IPR020003">
    <property type="entry name" value="ATPase_a/bsu_AS"/>
</dbReference>
<dbReference type="InterPro" id="IPR050053">
    <property type="entry name" value="ATPase_alpha/beta_chains"/>
</dbReference>
<dbReference type="InterPro" id="IPR004100">
    <property type="entry name" value="ATPase_F1/V1/A1_a/bsu_N"/>
</dbReference>
<dbReference type="InterPro" id="IPR036121">
    <property type="entry name" value="ATPase_F1/V1/A1_a/bsu_N_sf"/>
</dbReference>
<dbReference type="InterPro" id="IPR000194">
    <property type="entry name" value="ATPase_F1/V1/A1_a/bsu_nucl-bd"/>
</dbReference>
<dbReference type="InterPro" id="IPR024034">
    <property type="entry name" value="ATPase_F1/V1_b/a_C"/>
</dbReference>
<dbReference type="InterPro" id="IPR027417">
    <property type="entry name" value="P-loop_NTPase"/>
</dbReference>
<dbReference type="NCBIfam" id="TIGR01039">
    <property type="entry name" value="atpD"/>
    <property type="match status" value="1"/>
</dbReference>
<dbReference type="PANTHER" id="PTHR15184">
    <property type="entry name" value="ATP SYNTHASE"/>
    <property type="match status" value="1"/>
</dbReference>
<dbReference type="PANTHER" id="PTHR15184:SF71">
    <property type="entry name" value="ATP SYNTHASE SUBUNIT BETA, MITOCHONDRIAL"/>
    <property type="match status" value="1"/>
</dbReference>
<dbReference type="Pfam" id="PF00006">
    <property type="entry name" value="ATP-synt_ab"/>
    <property type="match status" value="1"/>
</dbReference>
<dbReference type="Pfam" id="PF02874">
    <property type="entry name" value="ATP-synt_ab_N"/>
    <property type="match status" value="1"/>
</dbReference>
<dbReference type="Pfam" id="PF22919">
    <property type="entry name" value="ATP-synt_VA_C"/>
    <property type="match status" value="1"/>
</dbReference>
<dbReference type="SMART" id="SM00382">
    <property type="entry name" value="AAA"/>
    <property type="match status" value="1"/>
</dbReference>
<dbReference type="SUPFAM" id="SSF47917">
    <property type="entry name" value="C-terminal domain of alpha and beta subunits of F1 ATP synthase"/>
    <property type="match status" value="1"/>
</dbReference>
<dbReference type="SUPFAM" id="SSF50615">
    <property type="entry name" value="N-terminal domain of alpha and beta subunits of F1 ATP synthase"/>
    <property type="match status" value="1"/>
</dbReference>
<dbReference type="SUPFAM" id="SSF52540">
    <property type="entry name" value="P-loop containing nucleoside triphosphate hydrolases"/>
    <property type="match status" value="1"/>
</dbReference>
<dbReference type="PROSITE" id="PS00152">
    <property type="entry name" value="ATPASE_ALPHA_BETA"/>
    <property type="match status" value="1"/>
</dbReference>
<proteinExistence type="inferred from homology"/>
<keyword id="KW-0066">ATP synthesis</keyword>
<keyword id="KW-0067">ATP-binding</keyword>
<keyword id="KW-1003">Cell membrane</keyword>
<keyword id="KW-0139">CF(1)</keyword>
<keyword id="KW-0375">Hydrogen ion transport</keyword>
<keyword id="KW-0406">Ion transport</keyword>
<keyword id="KW-0472">Membrane</keyword>
<keyword id="KW-0547">Nucleotide-binding</keyword>
<keyword id="KW-1185">Reference proteome</keyword>
<keyword id="KW-1278">Translocase</keyword>
<keyword id="KW-0813">Transport</keyword>